<keyword id="KW-1185">Reference proteome</keyword>
<organismHost>
    <name type="scientific">Homo sapiens</name>
    <name type="common">Human</name>
    <dbReference type="NCBI Taxonomy" id="9606"/>
</organismHost>
<gene>
    <name type="primary">US32</name>
</gene>
<name>US32_HCMVM</name>
<comment type="similarity">
    <text evidence="1">Belongs to the herpesviridae US1 family.</text>
</comment>
<dbReference type="EMBL" id="AY446894">
    <property type="protein sequence ID" value="AAR31720.1"/>
    <property type="molecule type" value="Genomic_DNA"/>
</dbReference>
<dbReference type="RefSeq" id="YP_081616.1">
    <property type="nucleotide sequence ID" value="NC_006273.2"/>
</dbReference>
<dbReference type="SMR" id="F5HD03"/>
<dbReference type="DNASU" id="3077487"/>
<dbReference type="GeneID" id="3077487"/>
<dbReference type="KEGG" id="vg:3077487"/>
<dbReference type="Reactome" id="R-HSA-9610379">
    <property type="pathway name" value="HCMV Late Events"/>
</dbReference>
<dbReference type="Proteomes" id="UP000000938">
    <property type="component" value="Segment"/>
</dbReference>
<dbReference type="InterPro" id="IPR004118">
    <property type="entry name" value="HEV_TT_vir_Orf2/Gyrovir_Vp2_N"/>
</dbReference>
<dbReference type="Pfam" id="PF02957">
    <property type="entry name" value="TT_ORF2-like"/>
    <property type="match status" value="1"/>
</dbReference>
<evidence type="ECO:0000305" key="1"/>
<organism>
    <name type="scientific">Human cytomegalovirus (strain Merlin)</name>
    <name type="common">HHV-5</name>
    <name type="synonym">Human herpesvirus 5</name>
    <dbReference type="NCBI Taxonomy" id="295027"/>
    <lineage>
        <taxon>Viruses</taxon>
        <taxon>Duplodnaviria</taxon>
        <taxon>Heunggongvirae</taxon>
        <taxon>Peploviricota</taxon>
        <taxon>Herviviricetes</taxon>
        <taxon>Herpesvirales</taxon>
        <taxon>Orthoherpesviridae</taxon>
        <taxon>Betaherpesvirinae</taxon>
        <taxon>Cytomegalovirus</taxon>
        <taxon>Cytomegalovirus humanbeta5</taxon>
        <taxon>Human cytomegalovirus</taxon>
    </lineage>
</organism>
<protein>
    <recommendedName>
        <fullName>Protein US32</fullName>
    </recommendedName>
</protein>
<accession>F5HD03</accession>
<proteinExistence type="inferred from homology"/>
<feature type="chain" id="PRO_0000416729" description="Protein US32">
    <location>
        <begin position="1"/>
        <end position="183"/>
    </location>
</feature>
<reference key="1">
    <citation type="journal article" date="2004" name="J. Gen. Virol.">
        <title>Genetic content of wild-type human cytomegalovirus.</title>
        <authorList>
            <person name="Dolan A."/>
            <person name="Cunningham C."/>
            <person name="Hector R.D."/>
            <person name="Hassan-Walker A.F."/>
            <person name="Lee L."/>
            <person name="Addison C."/>
            <person name="Dargan D.J."/>
            <person name="McGeoch D.J."/>
            <person name="Gatherer D."/>
            <person name="Emery V.C."/>
            <person name="Griffiths P.D."/>
            <person name="Sinzger C."/>
            <person name="McSharry B.P."/>
            <person name="Wilkinson G.W.G."/>
            <person name="Davison A.J."/>
        </authorList>
    </citation>
    <scope>NUCLEOTIDE SEQUENCE [LARGE SCALE GENOMIC DNA]</scope>
</reference>
<sequence>MAMYTSESERDWRRVIHDSHGLWCDCGDWREHLYCVYDSHFQRRPTTRAERRAANWRRQMRRLHRLWCFCQDWKCHALYAEWDGKESDDESSASSSGEAPEQQVPAWKTVRAFSRAYHHRINRGLRGTPPPRNLPGYEHASEGWRFCNRRERREDDLRTRAEPDRVVFQLGGVPPRRHRETYV</sequence>